<organism>
    <name type="scientific">Bos taurus</name>
    <name type="common">Bovine</name>
    <dbReference type="NCBI Taxonomy" id="9913"/>
    <lineage>
        <taxon>Eukaryota</taxon>
        <taxon>Metazoa</taxon>
        <taxon>Chordata</taxon>
        <taxon>Craniata</taxon>
        <taxon>Vertebrata</taxon>
        <taxon>Euteleostomi</taxon>
        <taxon>Mammalia</taxon>
        <taxon>Eutheria</taxon>
        <taxon>Laurasiatheria</taxon>
        <taxon>Artiodactyla</taxon>
        <taxon>Ruminantia</taxon>
        <taxon>Pecora</taxon>
        <taxon>Bovidae</taxon>
        <taxon>Bovinae</taxon>
        <taxon>Bos</taxon>
    </lineage>
</organism>
<name>NEMP1_BOVIN</name>
<feature type="signal peptide" evidence="4">
    <location>
        <begin position="1"/>
        <end position="44"/>
    </location>
</feature>
<feature type="chain" id="PRO_0000343659" description="Nuclear envelope integral membrane protein 1">
    <location>
        <begin position="45"/>
        <end position="445"/>
    </location>
</feature>
<feature type="transmembrane region" description="Helical" evidence="4">
    <location>
        <begin position="161"/>
        <end position="181"/>
    </location>
</feature>
<feature type="transmembrane region" description="Helical" evidence="4">
    <location>
        <begin position="186"/>
        <end position="206"/>
    </location>
</feature>
<feature type="transmembrane region" description="Helical" evidence="4">
    <location>
        <begin position="216"/>
        <end position="236"/>
    </location>
</feature>
<feature type="transmembrane region" description="Helical" evidence="4">
    <location>
        <begin position="245"/>
        <end position="265"/>
    </location>
</feature>
<feature type="transmembrane region" description="Helical" evidence="4">
    <location>
        <begin position="289"/>
        <end position="309"/>
    </location>
</feature>
<feature type="region of interest" description="A; required for its colocalization with lamins at the nuclear envelope" evidence="3">
    <location>
        <begin position="186"/>
        <end position="297"/>
    </location>
</feature>
<feature type="region of interest" description="Required for nuclear localization" evidence="3">
    <location>
        <begin position="336"/>
        <end position="445"/>
    </location>
</feature>
<feature type="region of interest" description="B; required for interaction with RAN-GTP" evidence="3">
    <location>
        <begin position="336"/>
        <end position="405"/>
    </location>
</feature>
<feature type="region of interest" description="Disordered" evidence="5">
    <location>
        <begin position="418"/>
        <end position="445"/>
    </location>
</feature>
<feature type="compositionally biased region" description="Acidic residues" evidence="5">
    <location>
        <begin position="418"/>
        <end position="430"/>
    </location>
</feature>
<feature type="modified residue" description="Phosphoserine" evidence="2">
    <location>
        <position position="368"/>
    </location>
</feature>
<feature type="modified residue" description="Phosphoserine" evidence="2">
    <location>
        <position position="424"/>
    </location>
</feature>
<feature type="modified residue" description="Phosphoserine" evidence="2">
    <location>
        <position position="425"/>
    </location>
</feature>
<feature type="glycosylation site" description="N-linked (GlcNAc...) asparagine" evidence="4">
    <location>
        <position position="125"/>
    </location>
</feature>
<evidence type="ECO:0000250" key="1">
    <source>
        <dbReference type="UniProtKB" id="B9X187"/>
    </source>
</evidence>
<evidence type="ECO:0000250" key="2">
    <source>
        <dbReference type="UniProtKB" id="O14524"/>
    </source>
</evidence>
<evidence type="ECO:0000250" key="3">
    <source>
        <dbReference type="UniProtKB" id="Q6ZQE4"/>
    </source>
</evidence>
<evidence type="ECO:0000255" key="4"/>
<evidence type="ECO:0000256" key="5">
    <source>
        <dbReference type="SAM" id="MobiDB-lite"/>
    </source>
</evidence>
<evidence type="ECO:0000305" key="6"/>
<dbReference type="EMBL" id="BC151486">
    <property type="protein sequence ID" value="AAI51487.1"/>
    <property type="molecule type" value="mRNA"/>
</dbReference>
<dbReference type="RefSeq" id="NP_001095631.1">
    <property type="nucleotide sequence ID" value="NM_001102161.1"/>
</dbReference>
<dbReference type="FunCoup" id="A7MBC7">
    <property type="interactions" value="2924"/>
</dbReference>
<dbReference type="STRING" id="9913.ENSBTAP00000019519"/>
<dbReference type="GlyCosmos" id="A7MBC7">
    <property type="glycosylation" value="1 site, No reported glycans"/>
</dbReference>
<dbReference type="GlyGen" id="A7MBC7">
    <property type="glycosylation" value="1 site"/>
</dbReference>
<dbReference type="PaxDb" id="9913-ENSBTAP00000019519"/>
<dbReference type="Ensembl" id="ENSBTAT00000019519.7">
    <property type="protein sequence ID" value="ENSBTAP00000019519.6"/>
    <property type="gene ID" value="ENSBTAG00000014659.7"/>
</dbReference>
<dbReference type="GeneID" id="533988"/>
<dbReference type="KEGG" id="bta:533988"/>
<dbReference type="CTD" id="23306"/>
<dbReference type="VEuPathDB" id="HostDB:ENSBTAG00000014659"/>
<dbReference type="VGNC" id="VGNC:56223">
    <property type="gene designation" value="NEMP1"/>
</dbReference>
<dbReference type="eggNOG" id="KOG3817">
    <property type="taxonomic scope" value="Eukaryota"/>
</dbReference>
<dbReference type="GeneTree" id="ENSGT00390000002174"/>
<dbReference type="HOGENOM" id="CLU_025225_0_0_1"/>
<dbReference type="InParanoid" id="A7MBC7"/>
<dbReference type="OMA" id="MAGCMKM"/>
<dbReference type="OrthoDB" id="509138at2759"/>
<dbReference type="Proteomes" id="UP000009136">
    <property type="component" value="Chromosome 5"/>
</dbReference>
<dbReference type="Bgee" id="ENSBTAG00000014659">
    <property type="expression patterns" value="Expressed in oocyte and 103 other cell types or tissues"/>
</dbReference>
<dbReference type="GO" id="GO:0005635">
    <property type="term" value="C:nuclear envelope"/>
    <property type="evidence" value="ECO:0000250"/>
    <property type="project" value="UniProtKB"/>
</dbReference>
<dbReference type="GO" id="GO:0005637">
    <property type="term" value="C:nuclear inner membrane"/>
    <property type="evidence" value="ECO:0007669"/>
    <property type="project" value="UniProtKB-SubCell"/>
</dbReference>
<dbReference type="GO" id="GO:0043131">
    <property type="term" value="P:erythrocyte enucleation"/>
    <property type="evidence" value="ECO:0000250"/>
    <property type="project" value="UniProtKB"/>
</dbReference>
<dbReference type="GO" id="GO:0043249">
    <property type="term" value="P:erythrocyte maturation"/>
    <property type="evidence" value="ECO:0000250"/>
    <property type="project" value="UniProtKB"/>
</dbReference>
<dbReference type="GO" id="GO:0071763">
    <property type="term" value="P:nuclear membrane organization"/>
    <property type="evidence" value="ECO:0007669"/>
    <property type="project" value="Ensembl"/>
</dbReference>
<dbReference type="InterPro" id="IPR019358">
    <property type="entry name" value="NEMP_fam"/>
</dbReference>
<dbReference type="PANTHER" id="PTHR13598">
    <property type="entry name" value="AT07567P-RELATED"/>
    <property type="match status" value="1"/>
</dbReference>
<dbReference type="PANTHER" id="PTHR13598:SF2">
    <property type="entry name" value="NUCLEAR ENVELOPE INTEGRAL MEMBRANE PROTEIN 1"/>
    <property type="match status" value="1"/>
</dbReference>
<dbReference type="Pfam" id="PF10225">
    <property type="entry name" value="NEMP"/>
    <property type="match status" value="1"/>
</dbReference>
<accession>A7MBC7</accession>
<protein>
    <recommendedName>
        <fullName>Nuclear envelope integral membrane protein 1</fullName>
    </recommendedName>
</protein>
<sequence>MAGGMKVAVLPAVGAGPWSWGAGGCGAVRLLLVLFGCFVCGSAGIDLNVVTLRESEILFMNTSRQSCYKNVLIPKWHDIWTRIQIRVNSSKLVRVTQVENEDKLKELEQFSIWNFFSSFLKEKLNDTYINVGLYSTKTCLKVEILEEDTKYSVIVTRRFDPKLFLIFLLGLTLFFCGDLLSRSQIFYYSTGMSVGIVASLLIIIFIVSKFMPKKSPIYIILVGGWSFSLYLIQLVFKNLQEIWRCYWQYLLSYVLAVGFMSFAVCYKYGPLENERSINLLTWTLQLLGLCFMYSSIQIPHIALAIVVIALCTKNLDYPIHWLYITYRKMCKATEKTVPPRLLTEEEYRLQGEVETRKALEQLREYCNSPDCSAWKTVSRIQSPKRFADFVEGSFHLTPNEVSVHEQEYGLGSIIAQDELSEETSSEEEDSDSRYPLVVQQNSFLT</sequence>
<gene>
    <name type="primary">NEMP1</name>
    <name type="synonym">TMEM194A</name>
</gene>
<reference key="1">
    <citation type="submission" date="2007-07" db="EMBL/GenBank/DDBJ databases">
        <authorList>
            <consortium name="NIH - Mammalian Gene Collection (MGC) project"/>
        </authorList>
    </citation>
    <scope>NUCLEOTIDE SEQUENCE [LARGE SCALE MRNA]</scope>
    <source>
        <strain>Hereford</strain>
        <tissue>Fetal liver</tissue>
    </source>
</reference>
<keyword id="KW-0265">Erythrocyte maturation</keyword>
<keyword id="KW-0325">Glycoprotein</keyword>
<keyword id="KW-0472">Membrane</keyword>
<keyword id="KW-0539">Nucleus</keyword>
<keyword id="KW-0597">Phosphoprotein</keyword>
<keyword id="KW-1185">Reference proteome</keyword>
<keyword id="KW-0732">Signal</keyword>
<keyword id="KW-0812">Transmembrane</keyword>
<keyword id="KW-1133">Transmembrane helix</keyword>
<comment type="function">
    <text evidence="2 3">Together with EMD, contributes to nuclear envelope stiffness in germ cells (By similarity). Required for female fertility (By similarity). Essential for normal erythropoiesis (By similarity). Required for efficient nuclear envelope opening and enucleation during the late stages of erythroblast maturation (By similarity).</text>
</comment>
<comment type="subunit">
    <text evidence="1 2 3">Homooligomer. Interacts with RAN-GTP. Interacts with EMD (By similarity).</text>
</comment>
<comment type="subcellular location">
    <subcellularLocation>
        <location evidence="3">Nucleus inner membrane</location>
        <topology evidence="4">Multi-pass membrane protein</topology>
        <orientation evidence="1">Nucleoplasmic side</orientation>
    </subcellularLocation>
    <subcellularLocation>
        <location evidence="3">Nucleus envelope</location>
    </subcellularLocation>
    <text evidence="3">Colocalizes with lamins and RAN-GTP at the nuclear envelope.</text>
</comment>
<comment type="domain">
    <text evidence="1">The transmembrane domains are required and sufficient for its oligomerization.</text>
</comment>
<comment type="PTM">
    <text evidence="3">Phosphorylation may regulate its interaction with RAN-GTP.</text>
</comment>
<comment type="similarity">
    <text evidence="6">Belongs to the NEMP family.</text>
</comment>
<proteinExistence type="evidence at transcript level"/>